<gene>
    <name evidence="1" type="primary">rpmC</name>
    <name type="ordered locus">PGN_1860</name>
</gene>
<feature type="chain" id="PRO_1000121797" description="Large ribosomal subunit protein uL29">
    <location>
        <begin position="1"/>
        <end position="64"/>
    </location>
</feature>
<dbReference type="EMBL" id="AP009380">
    <property type="protein sequence ID" value="BAG34379.1"/>
    <property type="molecule type" value="Genomic_DNA"/>
</dbReference>
<dbReference type="RefSeq" id="WP_004583590.1">
    <property type="nucleotide sequence ID" value="NZ_CP025930.1"/>
</dbReference>
<dbReference type="SMR" id="B2RLY4"/>
<dbReference type="GeneID" id="57239588"/>
<dbReference type="KEGG" id="pgn:PGN_1860"/>
<dbReference type="eggNOG" id="COG0255">
    <property type="taxonomic scope" value="Bacteria"/>
</dbReference>
<dbReference type="HOGENOM" id="CLU_158491_5_1_10"/>
<dbReference type="OrthoDB" id="5296761at2"/>
<dbReference type="BioCyc" id="PGIN431947:G1G2V-2074-MONOMER"/>
<dbReference type="Proteomes" id="UP000008842">
    <property type="component" value="Chromosome"/>
</dbReference>
<dbReference type="GO" id="GO:1990904">
    <property type="term" value="C:ribonucleoprotein complex"/>
    <property type="evidence" value="ECO:0007669"/>
    <property type="project" value="UniProtKB-KW"/>
</dbReference>
<dbReference type="GO" id="GO:0005840">
    <property type="term" value="C:ribosome"/>
    <property type="evidence" value="ECO:0007669"/>
    <property type="project" value="UniProtKB-KW"/>
</dbReference>
<dbReference type="GO" id="GO:0003735">
    <property type="term" value="F:structural constituent of ribosome"/>
    <property type="evidence" value="ECO:0007669"/>
    <property type="project" value="InterPro"/>
</dbReference>
<dbReference type="GO" id="GO:0006412">
    <property type="term" value="P:translation"/>
    <property type="evidence" value="ECO:0007669"/>
    <property type="project" value="UniProtKB-UniRule"/>
</dbReference>
<dbReference type="CDD" id="cd00427">
    <property type="entry name" value="Ribosomal_L29_HIP"/>
    <property type="match status" value="1"/>
</dbReference>
<dbReference type="Gene3D" id="1.10.287.310">
    <property type="match status" value="1"/>
</dbReference>
<dbReference type="HAMAP" id="MF_00374">
    <property type="entry name" value="Ribosomal_uL29"/>
    <property type="match status" value="1"/>
</dbReference>
<dbReference type="InterPro" id="IPR001854">
    <property type="entry name" value="Ribosomal_uL29"/>
</dbReference>
<dbReference type="InterPro" id="IPR036049">
    <property type="entry name" value="Ribosomal_uL29_sf"/>
</dbReference>
<dbReference type="NCBIfam" id="TIGR00012">
    <property type="entry name" value="L29"/>
    <property type="match status" value="1"/>
</dbReference>
<dbReference type="Pfam" id="PF00831">
    <property type="entry name" value="Ribosomal_L29"/>
    <property type="match status" value="1"/>
</dbReference>
<dbReference type="SUPFAM" id="SSF46561">
    <property type="entry name" value="Ribosomal protein L29 (L29p)"/>
    <property type="match status" value="1"/>
</dbReference>
<reference key="1">
    <citation type="journal article" date="2008" name="DNA Res.">
        <title>Determination of the genome sequence of Porphyromonas gingivalis strain ATCC 33277 and genomic comparison with strain W83 revealed extensive genome rearrangements in P. gingivalis.</title>
        <authorList>
            <person name="Naito M."/>
            <person name="Hirakawa H."/>
            <person name="Yamashita A."/>
            <person name="Ohara N."/>
            <person name="Shoji M."/>
            <person name="Yukitake H."/>
            <person name="Nakayama K."/>
            <person name="Toh H."/>
            <person name="Yoshimura F."/>
            <person name="Kuhara S."/>
            <person name="Hattori M."/>
            <person name="Hayashi T."/>
            <person name="Nakayama K."/>
        </authorList>
    </citation>
    <scope>NUCLEOTIDE SEQUENCE [LARGE SCALE GENOMIC DNA]</scope>
    <source>
        <strain>ATCC 33277 / DSM 20709 / CIP 103683 / JCM 12257 / NCTC 11834 / 2561</strain>
    </source>
</reference>
<protein>
    <recommendedName>
        <fullName evidence="1">Large ribosomal subunit protein uL29</fullName>
    </recommendedName>
    <alternativeName>
        <fullName evidence="2">50S ribosomal protein L29</fullName>
    </alternativeName>
</protein>
<proteinExistence type="inferred from homology"/>
<evidence type="ECO:0000255" key="1">
    <source>
        <dbReference type="HAMAP-Rule" id="MF_00374"/>
    </source>
</evidence>
<evidence type="ECO:0000305" key="2"/>
<accession>B2RLY4</accession>
<sequence length="64" mass="7485">MKIAEIKELATKELQERLDAEVAAYDQMRINHAVSPLDSPAKLKHQRRMIAQMKTVLRQRELNK</sequence>
<name>RL29_PORG3</name>
<keyword id="KW-0687">Ribonucleoprotein</keyword>
<keyword id="KW-0689">Ribosomal protein</keyword>
<organism>
    <name type="scientific">Porphyromonas gingivalis (strain ATCC 33277 / DSM 20709 / CIP 103683 / JCM 12257 / NCTC 11834 / 2561)</name>
    <dbReference type="NCBI Taxonomy" id="431947"/>
    <lineage>
        <taxon>Bacteria</taxon>
        <taxon>Pseudomonadati</taxon>
        <taxon>Bacteroidota</taxon>
        <taxon>Bacteroidia</taxon>
        <taxon>Bacteroidales</taxon>
        <taxon>Porphyromonadaceae</taxon>
        <taxon>Porphyromonas</taxon>
    </lineage>
</organism>
<comment type="similarity">
    <text evidence="1">Belongs to the universal ribosomal protein uL29 family.</text>
</comment>